<evidence type="ECO:0000250" key="1"/>
<evidence type="ECO:0000305" key="2"/>
<proteinExistence type="inferred from homology"/>
<protein>
    <recommendedName>
        <fullName>Maltodextrin phosphorylase</fullName>
        <ecNumber>2.4.1.1</ecNumber>
    </recommendedName>
</protein>
<sequence>MLSLQEFVQNRYNKTIAECSNEELYLALLNYSKLASSQKPVNTGKKKVYYISAEFLIGKLLSNNLINLGLYDDVKKELAAAGKDLIEVEEVELEPSLGNGGLGRLAACFIDSIATLGLNGDGVGLNYHFGLFQQVLKNNQQETIPNAWLTEQNWLVRSSRSYQVPFADFTLTSTLYDIDVTGYETATKNRLRLFDLDSVDSSIIKDGINFDKTDIARNLTLFLYPDDSDRQGELLRIFQQYFMVSNGAQLIIDEAIEKGSNLHDLADYAVVQINDTHPSMVIPELIRLLTARGIDLDEAISIVRSMTAYTNHTILAEALEKWPLEFLQEVVPHLVPIIEELDRRVKAEYKDPAVQIIDESGRVHMAHMDIHYGYSVNGVAALHTEILKNSELKAFYDLYPEKFNNKTNGITFRRWLMHANPRLSHYLDEILGDGWHHEADELEKLLSYEDKAVVKEKLESIKAHNKRKLARHLKEHQGVEINPNSIFDIQIKRLHEYKRQQMNALYVIHKYLDIKAGNIPARPITIFFGGKAAPAYTIAQDIIHLILCMSEVIANDPAVAPHLQVVMVENYNVTAASFLIPACDISEQISLASKEASGTGNMKFMLNGALTLGTMDGANVEIAELVGEENIYIFGEDSETVIDLYAKAAYKSSEFYAREAIKPLVDFIVSDAVLAAGNKERLERFYNELINKDWFMTLLDLEDYIKVKEQMLADYEDRDAWLDKVIVNISKAGFFSSDRTIAQYNEDIWHLN</sequence>
<keyword id="KW-0021">Allosteric enzyme</keyword>
<keyword id="KW-0119">Carbohydrate metabolism</keyword>
<keyword id="KW-0328">Glycosyltransferase</keyword>
<keyword id="KW-0663">Pyridoxal phosphate</keyword>
<keyword id="KW-1185">Reference proteome</keyword>
<keyword id="KW-0808">Transferase</keyword>
<accession>P29849</accession>
<dbReference type="EC" id="2.4.1.1"/>
<dbReference type="EMBL" id="AE005672">
    <property type="protein sequence ID" value="AAK76165.1"/>
    <property type="molecule type" value="Genomic_DNA"/>
</dbReference>
<dbReference type="EMBL" id="J01796">
    <property type="protein sequence ID" value="AAA26924.1"/>
    <property type="molecule type" value="Genomic_DNA"/>
</dbReference>
<dbReference type="PIR" id="D95246">
    <property type="entry name" value="D95246"/>
</dbReference>
<dbReference type="SMR" id="P29849"/>
<dbReference type="CAZy" id="GT35">
    <property type="family name" value="Glycosyltransferase Family 35"/>
</dbReference>
<dbReference type="PaxDb" id="170187-SP_2106"/>
<dbReference type="EnsemblBacteria" id="AAK76165">
    <property type="protein sequence ID" value="AAK76165"/>
    <property type="gene ID" value="SP_2106"/>
</dbReference>
<dbReference type="KEGG" id="spn:SP_2106"/>
<dbReference type="eggNOG" id="COG0058">
    <property type="taxonomic scope" value="Bacteria"/>
</dbReference>
<dbReference type="PhylomeDB" id="P29849"/>
<dbReference type="BioCyc" id="SPNE170187:G1FZB-2194-MONOMER"/>
<dbReference type="Proteomes" id="UP000000585">
    <property type="component" value="Chromosome"/>
</dbReference>
<dbReference type="GO" id="GO:0005737">
    <property type="term" value="C:cytoplasm"/>
    <property type="evidence" value="ECO:0007669"/>
    <property type="project" value="TreeGrafter"/>
</dbReference>
<dbReference type="GO" id="GO:0008184">
    <property type="term" value="F:glycogen phosphorylase activity"/>
    <property type="evidence" value="ECO:0007669"/>
    <property type="project" value="InterPro"/>
</dbReference>
<dbReference type="GO" id="GO:0030170">
    <property type="term" value="F:pyridoxal phosphate binding"/>
    <property type="evidence" value="ECO:0007669"/>
    <property type="project" value="InterPro"/>
</dbReference>
<dbReference type="GO" id="GO:0005980">
    <property type="term" value="P:glycogen catabolic process"/>
    <property type="evidence" value="ECO:0007669"/>
    <property type="project" value="TreeGrafter"/>
</dbReference>
<dbReference type="FunFam" id="3.40.50.2000:FF:000003">
    <property type="entry name" value="Alpha-1,4 glucan phosphorylase"/>
    <property type="match status" value="1"/>
</dbReference>
<dbReference type="Gene3D" id="3.40.50.2000">
    <property type="entry name" value="Glycogen Phosphorylase B"/>
    <property type="match status" value="2"/>
</dbReference>
<dbReference type="InterPro" id="IPR011833">
    <property type="entry name" value="Glycg_phsphrylas"/>
</dbReference>
<dbReference type="InterPro" id="IPR000811">
    <property type="entry name" value="Glyco_trans_35"/>
</dbReference>
<dbReference type="InterPro" id="IPR035090">
    <property type="entry name" value="Pyridoxal_P_attach_site"/>
</dbReference>
<dbReference type="NCBIfam" id="TIGR02093">
    <property type="entry name" value="P_ylase"/>
    <property type="match status" value="1"/>
</dbReference>
<dbReference type="PANTHER" id="PTHR11468">
    <property type="entry name" value="GLYCOGEN PHOSPHORYLASE"/>
    <property type="match status" value="1"/>
</dbReference>
<dbReference type="PANTHER" id="PTHR11468:SF3">
    <property type="entry name" value="GLYCOGEN PHOSPHORYLASE, LIVER FORM"/>
    <property type="match status" value="1"/>
</dbReference>
<dbReference type="Pfam" id="PF00343">
    <property type="entry name" value="Phosphorylase"/>
    <property type="match status" value="1"/>
</dbReference>
<dbReference type="PIRSF" id="PIRSF000460">
    <property type="entry name" value="Pprylas_GlgP"/>
    <property type="match status" value="1"/>
</dbReference>
<dbReference type="SUPFAM" id="SSF53756">
    <property type="entry name" value="UDP-Glycosyltransferase/glycogen phosphorylase"/>
    <property type="match status" value="1"/>
</dbReference>
<dbReference type="PROSITE" id="PS00102">
    <property type="entry name" value="PHOSPHORYLASE"/>
    <property type="match status" value="1"/>
</dbReference>
<comment type="function">
    <text>Phosphorylase is an important allosteric enzyme in carbohydrate metabolism. Enzymes from different sources differ in their regulatory mechanisms and in their natural substrates. However, all known phosphorylases share catalytic and structural properties.</text>
</comment>
<comment type="catalytic activity">
    <reaction>
        <text>[(1-&gt;4)-alpha-D-glucosyl](n) + phosphate = [(1-&gt;4)-alpha-D-glucosyl](n-1) + alpha-D-glucose 1-phosphate</text>
        <dbReference type="Rhea" id="RHEA:41732"/>
        <dbReference type="Rhea" id="RHEA-COMP:9584"/>
        <dbReference type="Rhea" id="RHEA-COMP:9586"/>
        <dbReference type="ChEBI" id="CHEBI:15444"/>
        <dbReference type="ChEBI" id="CHEBI:43474"/>
        <dbReference type="ChEBI" id="CHEBI:58601"/>
        <dbReference type="EC" id="2.4.1.1"/>
    </reaction>
</comment>
<comment type="cofactor">
    <cofactor>
        <name>pyridoxal 5'-phosphate</name>
        <dbReference type="ChEBI" id="CHEBI:597326"/>
    </cofactor>
</comment>
<comment type="similarity">
    <text evidence="2">Belongs to the glycogen phosphorylase family.</text>
</comment>
<reference key="1">
    <citation type="journal article" date="2001" name="Science">
        <title>Complete genome sequence of a virulent isolate of Streptococcus pneumoniae.</title>
        <authorList>
            <person name="Tettelin H."/>
            <person name="Nelson K.E."/>
            <person name="Paulsen I.T."/>
            <person name="Eisen J.A."/>
            <person name="Read T.D."/>
            <person name="Peterson S.N."/>
            <person name="Heidelberg J.F."/>
            <person name="DeBoy R.T."/>
            <person name="Haft D.H."/>
            <person name="Dodson R.J."/>
            <person name="Durkin A.S."/>
            <person name="Gwinn M.L."/>
            <person name="Kolonay J.F."/>
            <person name="Nelson W.C."/>
            <person name="Peterson J.D."/>
            <person name="Umayam L.A."/>
            <person name="White O."/>
            <person name="Salzberg S.L."/>
            <person name="Lewis M.R."/>
            <person name="Radune D."/>
            <person name="Holtzapple E.K."/>
            <person name="Khouri H.M."/>
            <person name="Wolf A.M."/>
            <person name="Utterback T.R."/>
            <person name="Hansen C.L."/>
            <person name="McDonald L.A."/>
            <person name="Feldblyum T.V."/>
            <person name="Angiuoli S.V."/>
            <person name="Dickinson T."/>
            <person name="Hickey E.K."/>
            <person name="Holt I.E."/>
            <person name="Loftus B.J."/>
            <person name="Yang F."/>
            <person name="Smith H.O."/>
            <person name="Venter J.C."/>
            <person name="Dougherty B.A."/>
            <person name="Morrison D.A."/>
            <person name="Hollingshead S.K."/>
            <person name="Fraser C.M."/>
        </authorList>
    </citation>
    <scope>NUCLEOTIDE SEQUENCE [LARGE SCALE GENOMIC DNA]</scope>
    <source>
        <strain>ATCC BAA-334 / TIGR4</strain>
    </source>
</reference>
<reference key="2">
    <citation type="journal article" date="1982" name="Cell">
        <title>Identification of base mismatches recognized by the heteroduplex-DNA-repair system of Streptococcus pneumoniae.</title>
        <authorList>
            <person name="Lacks S.A."/>
            <person name="Dunn J.J."/>
            <person name="Greenberg B."/>
        </authorList>
    </citation>
    <scope>NUCLEOTIDE SEQUENCE [GENOMIC DNA] OF 1-89</scope>
</reference>
<organism>
    <name type="scientific">Streptococcus pneumoniae serotype 4 (strain ATCC BAA-334 / TIGR4)</name>
    <dbReference type="NCBI Taxonomy" id="170187"/>
    <lineage>
        <taxon>Bacteria</taxon>
        <taxon>Bacillati</taxon>
        <taxon>Bacillota</taxon>
        <taxon>Bacilli</taxon>
        <taxon>Lactobacillales</taxon>
        <taxon>Streptococcaceae</taxon>
        <taxon>Streptococcus</taxon>
    </lineage>
</organism>
<feature type="chain" id="PRO_0000188562" description="Maltodextrin phosphorylase">
    <location>
        <begin position="1"/>
        <end position="752"/>
    </location>
</feature>
<feature type="modified residue" description="N6-(pyridoxal phosphate)lysine" evidence="1">
    <location>
        <position position="603"/>
    </location>
</feature>
<feature type="sequence conflict" description="In Ref. 2; AAA26924." evidence="2" ref="2">
    <original>GKDLIEVE</original>
    <variation>ATPTTKGT</variation>
    <location>
        <begin position="82"/>
        <end position="89"/>
    </location>
</feature>
<name>PHSM_STRPN</name>
<gene>
    <name type="primary">malP</name>
    <name type="ordered locus">SP_2106</name>
</gene>